<reference key="1">
    <citation type="journal article" date="2002" name="Nature">
        <title>The genome sequence of Schizosaccharomyces pombe.</title>
        <authorList>
            <person name="Wood V."/>
            <person name="Gwilliam R."/>
            <person name="Rajandream M.A."/>
            <person name="Lyne M.H."/>
            <person name="Lyne R."/>
            <person name="Stewart A."/>
            <person name="Sgouros J.G."/>
            <person name="Peat N."/>
            <person name="Hayles J."/>
            <person name="Baker S.G."/>
            <person name="Basham D."/>
            <person name="Bowman S."/>
            <person name="Brooks K."/>
            <person name="Brown D."/>
            <person name="Brown S."/>
            <person name="Chillingworth T."/>
            <person name="Churcher C.M."/>
            <person name="Collins M."/>
            <person name="Connor R."/>
            <person name="Cronin A."/>
            <person name="Davis P."/>
            <person name="Feltwell T."/>
            <person name="Fraser A."/>
            <person name="Gentles S."/>
            <person name="Goble A."/>
            <person name="Hamlin N."/>
            <person name="Harris D.E."/>
            <person name="Hidalgo J."/>
            <person name="Hodgson G."/>
            <person name="Holroyd S."/>
            <person name="Hornsby T."/>
            <person name="Howarth S."/>
            <person name="Huckle E.J."/>
            <person name="Hunt S."/>
            <person name="Jagels K."/>
            <person name="James K.D."/>
            <person name="Jones L."/>
            <person name="Jones M."/>
            <person name="Leather S."/>
            <person name="McDonald S."/>
            <person name="McLean J."/>
            <person name="Mooney P."/>
            <person name="Moule S."/>
            <person name="Mungall K.L."/>
            <person name="Murphy L.D."/>
            <person name="Niblett D."/>
            <person name="Odell C."/>
            <person name="Oliver K."/>
            <person name="O'Neil S."/>
            <person name="Pearson D."/>
            <person name="Quail M.A."/>
            <person name="Rabbinowitsch E."/>
            <person name="Rutherford K.M."/>
            <person name="Rutter S."/>
            <person name="Saunders D."/>
            <person name="Seeger K."/>
            <person name="Sharp S."/>
            <person name="Skelton J."/>
            <person name="Simmonds M.N."/>
            <person name="Squares R."/>
            <person name="Squares S."/>
            <person name="Stevens K."/>
            <person name="Taylor K."/>
            <person name="Taylor R.G."/>
            <person name="Tivey A."/>
            <person name="Walsh S.V."/>
            <person name="Warren T."/>
            <person name="Whitehead S."/>
            <person name="Woodward J.R."/>
            <person name="Volckaert G."/>
            <person name="Aert R."/>
            <person name="Robben J."/>
            <person name="Grymonprez B."/>
            <person name="Weltjens I."/>
            <person name="Vanstreels E."/>
            <person name="Rieger M."/>
            <person name="Schaefer M."/>
            <person name="Mueller-Auer S."/>
            <person name="Gabel C."/>
            <person name="Fuchs M."/>
            <person name="Duesterhoeft A."/>
            <person name="Fritzc C."/>
            <person name="Holzer E."/>
            <person name="Moestl D."/>
            <person name="Hilbert H."/>
            <person name="Borzym K."/>
            <person name="Langer I."/>
            <person name="Beck A."/>
            <person name="Lehrach H."/>
            <person name="Reinhardt R."/>
            <person name="Pohl T.M."/>
            <person name="Eger P."/>
            <person name="Zimmermann W."/>
            <person name="Wedler H."/>
            <person name="Wambutt R."/>
            <person name="Purnelle B."/>
            <person name="Goffeau A."/>
            <person name="Cadieu E."/>
            <person name="Dreano S."/>
            <person name="Gloux S."/>
            <person name="Lelaure V."/>
            <person name="Mottier S."/>
            <person name="Galibert F."/>
            <person name="Aves S.J."/>
            <person name="Xiang Z."/>
            <person name="Hunt C."/>
            <person name="Moore K."/>
            <person name="Hurst S.M."/>
            <person name="Lucas M."/>
            <person name="Rochet M."/>
            <person name="Gaillardin C."/>
            <person name="Tallada V.A."/>
            <person name="Garzon A."/>
            <person name="Thode G."/>
            <person name="Daga R.R."/>
            <person name="Cruzado L."/>
            <person name="Jimenez J."/>
            <person name="Sanchez M."/>
            <person name="del Rey F."/>
            <person name="Benito J."/>
            <person name="Dominguez A."/>
            <person name="Revuelta J.L."/>
            <person name="Moreno S."/>
            <person name="Armstrong J."/>
            <person name="Forsburg S.L."/>
            <person name="Cerutti L."/>
            <person name="Lowe T."/>
            <person name="McCombie W.R."/>
            <person name="Paulsen I."/>
            <person name="Potashkin J."/>
            <person name="Shpakovski G.V."/>
            <person name="Ussery D."/>
            <person name="Barrell B.G."/>
            <person name="Nurse P."/>
        </authorList>
    </citation>
    <scope>NUCLEOTIDE SEQUENCE [LARGE SCALE GENOMIC DNA]</scope>
    <source>
        <strain>972 / ATCC 24843</strain>
    </source>
</reference>
<reference key="2">
    <citation type="journal article" date="2002" name="Mol. Cell. Biol.">
        <title>Proteomics analysis reveals stable multiprotein complexes in both fission and budding yeasts containing Myb-related Cdc5p/Cef1p, novel pre-mRNA splicing factors, and snRNAs.</title>
        <authorList>
            <person name="Ohi M.D."/>
            <person name="Link A.J."/>
            <person name="Ren L."/>
            <person name="Jennings J.L."/>
            <person name="McDonald W.H."/>
            <person name="Gould K.L."/>
        </authorList>
    </citation>
    <scope>IDENTIFICATION IN THE CWF COMPLEX</scope>
    <scope>IDENTIFICATION BY MASS SPECTROMETRY</scope>
</reference>
<reference key="3">
    <citation type="journal article" date="2006" name="Nat. Biotechnol.">
        <title>ORFeome cloning and global analysis of protein localization in the fission yeast Schizosaccharomyces pombe.</title>
        <authorList>
            <person name="Matsuyama A."/>
            <person name="Arai R."/>
            <person name="Yashiroda Y."/>
            <person name="Shirai A."/>
            <person name="Kamata A."/>
            <person name="Sekido S."/>
            <person name="Kobayashi Y."/>
            <person name="Hashimoto A."/>
            <person name="Hamamoto M."/>
            <person name="Hiraoka Y."/>
            <person name="Horinouchi S."/>
            <person name="Yoshida M."/>
        </authorList>
    </citation>
    <scope>SUBCELLULAR LOCATION [LARGE SCALE ANALYSIS]</scope>
</reference>
<reference key="4">
    <citation type="journal article" date="2008" name="J. Proteome Res.">
        <title>Phosphoproteome analysis of fission yeast.</title>
        <authorList>
            <person name="Wilson-Grady J.T."/>
            <person name="Villen J."/>
            <person name="Gygi S.P."/>
        </authorList>
    </citation>
    <scope>PHOSPHORYLATION [LARGE SCALE ANALYSIS] AT SER-118; SER-285 AND SER-286</scope>
    <scope>IDENTIFICATION BY MASS SPECTROMETRY</scope>
</reference>
<proteinExistence type="evidence at protein level"/>
<accession>O14161</accession>
<accession>Q9UT69</accession>
<protein>
    <recommendedName>
        <fullName>Pre-mRNA-splicing factor cwf21</fullName>
    </recommendedName>
    <alternativeName>
        <fullName>Complexed with cdc5 protein 21</fullName>
    </alternativeName>
</protein>
<keyword id="KW-0002">3D-structure</keyword>
<keyword id="KW-0963">Cytoplasm</keyword>
<keyword id="KW-0507">mRNA processing</keyword>
<keyword id="KW-0508">mRNA splicing</keyword>
<keyword id="KW-0539">Nucleus</keyword>
<keyword id="KW-0597">Phosphoprotein</keyword>
<keyword id="KW-1185">Reference proteome</keyword>
<keyword id="KW-0747">Spliceosome</keyword>
<organism>
    <name type="scientific">Schizosaccharomyces pombe (strain 972 / ATCC 24843)</name>
    <name type="common">Fission yeast</name>
    <dbReference type="NCBI Taxonomy" id="284812"/>
    <lineage>
        <taxon>Eukaryota</taxon>
        <taxon>Fungi</taxon>
        <taxon>Dikarya</taxon>
        <taxon>Ascomycota</taxon>
        <taxon>Taphrinomycotina</taxon>
        <taxon>Schizosaccharomycetes</taxon>
        <taxon>Schizosaccharomycetales</taxon>
        <taxon>Schizosaccharomycetaceae</taxon>
        <taxon>Schizosaccharomyces</taxon>
    </lineage>
</organism>
<dbReference type="EMBL" id="CU329670">
    <property type="protein sequence ID" value="CAB58555.1"/>
    <property type="molecule type" value="Genomic_DNA"/>
</dbReference>
<dbReference type="PIR" id="T38779">
    <property type="entry name" value="T38779"/>
</dbReference>
<dbReference type="RefSeq" id="NP_593820.1">
    <property type="nucleotide sequence ID" value="NM_001019250.2"/>
</dbReference>
<dbReference type="PDB" id="9ESH">
    <property type="method" value="EM"/>
    <property type="resolution" value="3.20 A"/>
    <property type="chains" value="b=1-293"/>
</dbReference>
<dbReference type="PDB" id="9ESI">
    <property type="method" value="EM"/>
    <property type="resolution" value="3.10 A"/>
    <property type="chains" value="b=1-293"/>
</dbReference>
<dbReference type="PDBsum" id="9ESH"/>
<dbReference type="PDBsum" id="9ESI"/>
<dbReference type="EMDB" id="EMD-19941"/>
<dbReference type="EMDB" id="EMD-19942"/>
<dbReference type="SMR" id="O14161"/>
<dbReference type="BioGRID" id="280030">
    <property type="interactions" value="100"/>
</dbReference>
<dbReference type="FunCoup" id="O14161">
    <property type="interactions" value="58"/>
</dbReference>
<dbReference type="IntAct" id="O14161">
    <property type="interactions" value="4"/>
</dbReference>
<dbReference type="STRING" id="284812.O14161"/>
<dbReference type="iPTMnet" id="O14161"/>
<dbReference type="PaxDb" id="4896-SPAC4A8.09c.1"/>
<dbReference type="EnsemblFungi" id="SPAC4A8.09c.1">
    <property type="protein sequence ID" value="SPAC4A8.09c.1:pep"/>
    <property type="gene ID" value="SPAC4A8.09c"/>
</dbReference>
<dbReference type="GeneID" id="2543616"/>
<dbReference type="KEGG" id="spo:2543616"/>
<dbReference type="PomBase" id="SPAC4A8.09c">
    <property type="gene designation" value="cwf21"/>
</dbReference>
<dbReference type="VEuPathDB" id="FungiDB:SPAC4A8.09c"/>
<dbReference type="eggNOG" id="KOG1869">
    <property type="taxonomic scope" value="Eukaryota"/>
</dbReference>
<dbReference type="HOGENOM" id="CLU_950458_0_0_1"/>
<dbReference type="InParanoid" id="O14161"/>
<dbReference type="PRO" id="PR:O14161"/>
<dbReference type="Proteomes" id="UP000002485">
    <property type="component" value="Chromosome I"/>
</dbReference>
<dbReference type="GO" id="GO:0005737">
    <property type="term" value="C:cytoplasm"/>
    <property type="evidence" value="ECO:0007669"/>
    <property type="project" value="UniProtKB-SubCell"/>
</dbReference>
<dbReference type="GO" id="GO:0005634">
    <property type="term" value="C:nucleus"/>
    <property type="evidence" value="ECO:0007005"/>
    <property type="project" value="PomBase"/>
</dbReference>
<dbReference type="GO" id="GO:0000974">
    <property type="term" value="C:Prp19 complex"/>
    <property type="evidence" value="ECO:0000314"/>
    <property type="project" value="PomBase"/>
</dbReference>
<dbReference type="GO" id="GO:0005684">
    <property type="term" value="C:U2-type spliceosomal complex"/>
    <property type="evidence" value="ECO:0000314"/>
    <property type="project" value="PomBase"/>
</dbReference>
<dbReference type="GO" id="GO:0045292">
    <property type="term" value="P:mRNA cis splicing, via spliceosome"/>
    <property type="evidence" value="ECO:0000269"/>
    <property type="project" value="PomBase"/>
</dbReference>
<dbReference type="CDD" id="cd21372">
    <property type="entry name" value="cwf21_CWC21-like"/>
    <property type="match status" value="1"/>
</dbReference>
<dbReference type="InterPro" id="IPR051372">
    <property type="entry name" value="CWC21"/>
</dbReference>
<dbReference type="InterPro" id="IPR013170">
    <property type="entry name" value="mRNA_splic_Cwf21_dom"/>
</dbReference>
<dbReference type="PANTHER" id="PTHR36562">
    <property type="entry name" value="SERINE/ARGININE REPETITIVE MATRIX 2"/>
    <property type="match status" value="1"/>
</dbReference>
<dbReference type="PANTHER" id="PTHR36562:SF5">
    <property type="entry name" value="SERINE_ARGININE REPETITIVE MATRIX 2"/>
    <property type="match status" value="1"/>
</dbReference>
<dbReference type="Pfam" id="PF08312">
    <property type="entry name" value="cwf21"/>
    <property type="match status" value="1"/>
</dbReference>
<dbReference type="SMART" id="SM01115">
    <property type="entry name" value="cwf21"/>
    <property type="match status" value="1"/>
</dbReference>
<evidence type="ECO:0000250" key="1"/>
<evidence type="ECO:0000255" key="2"/>
<evidence type="ECO:0000256" key="3">
    <source>
        <dbReference type="SAM" id="MobiDB-lite"/>
    </source>
</evidence>
<evidence type="ECO:0000269" key="4">
    <source>
    </source>
</evidence>
<evidence type="ECO:0000269" key="5">
    <source>
    </source>
</evidence>
<evidence type="ECO:0000269" key="6">
    <source>
    </source>
</evidence>
<evidence type="ECO:0000305" key="7"/>
<evidence type="ECO:0007829" key="8">
    <source>
        <dbReference type="PDB" id="9ESI"/>
    </source>
</evidence>
<feature type="chain" id="PRO_0000123502" description="Pre-mRNA-splicing factor cwf21">
    <location>
        <begin position="1"/>
        <end position="293"/>
    </location>
</feature>
<feature type="domain" description="CWF21" evidence="2">
    <location>
        <begin position="55"/>
        <end position="98"/>
    </location>
</feature>
<feature type="region of interest" description="Disordered" evidence="3">
    <location>
        <begin position="30"/>
        <end position="52"/>
    </location>
</feature>
<feature type="region of interest" description="Disordered" evidence="3">
    <location>
        <begin position="80"/>
        <end position="119"/>
    </location>
</feature>
<feature type="region of interest" description="Disordered" evidence="3">
    <location>
        <begin position="146"/>
        <end position="293"/>
    </location>
</feature>
<feature type="compositionally biased region" description="Basic and acidic residues" evidence="3">
    <location>
        <begin position="43"/>
        <end position="52"/>
    </location>
</feature>
<feature type="compositionally biased region" description="Polar residues" evidence="3">
    <location>
        <begin position="80"/>
        <end position="97"/>
    </location>
</feature>
<feature type="compositionally biased region" description="Basic and acidic residues" evidence="3">
    <location>
        <begin position="106"/>
        <end position="119"/>
    </location>
</feature>
<feature type="compositionally biased region" description="Basic and acidic residues" evidence="3">
    <location>
        <begin position="159"/>
        <end position="186"/>
    </location>
</feature>
<feature type="compositionally biased region" description="Basic and acidic residues" evidence="3">
    <location>
        <begin position="195"/>
        <end position="214"/>
    </location>
</feature>
<feature type="compositionally biased region" description="Basic and acidic residues" evidence="3">
    <location>
        <begin position="227"/>
        <end position="259"/>
    </location>
</feature>
<feature type="modified residue" description="Phosphoserine" evidence="6">
    <location>
        <position position="118"/>
    </location>
</feature>
<feature type="modified residue" description="Phosphoserine" evidence="6">
    <location>
        <position position="285"/>
    </location>
</feature>
<feature type="modified residue" description="Phosphoserine" evidence="6">
    <location>
        <position position="286"/>
    </location>
</feature>
<feature type="strand" evidence="8">
    <location>
        <begin position="14"/>
        <end position="16"/>
    </location>
</feature>
<feature type="strand" evidence="8">
    <location>
        <begin position="20"/>
        <end position="22"/>
    </location>
</feature>
<feature type="helix" evidence="8">
    <location>
        <begin position="54"/>
        <end position="91"/>
    </location>
</feature>
<feature type="helix" evidence="8">
    <location>
        <begin position="122"/>
        <end position="144"/>
    </location>
</feature>
<comment type="function">
    <text evidence="1">Involved in pre-mRNA splicing. May function at or prior to the first catalytic step of splicing at the catalytic center of the spliceosome. May do so by stabilizing the catalytic center or the position of the RNA substrate (By similarity).</text>
</comment>
<comment type="subunit">
    <text evidence="4">Belongs to the 40S cdc5-associated complex (or cwf complex), a spliceosome sub-complex reminiscent of a late-stage spliceosome composed of the U2, U5 and U6 snRNAs and at least brr2, cdc5, cwf2/prp3, cwf3/syf1, cwf4/syf3, cwf5/ecm2, spp42/cwf6, cwf7/spf27, cwf8, cwf9, cwf10, cwf11, cwf12, prp45/cwf13, cwf14, cwf15, cwf16, cwf17, cwf18, cwf19, cwf20, cwf21, cwf22, cwf23, cwf24, cwf25, cwf26, cyp7/cwf27, cwf28, cwf29/ist3, lea1, msl1, prp5/cwf1, prp10, prp12/sap130, prp17, prp22, sap61, sap62, sap114, sap145, slu7, smb1, smd1, smd3, smf1, smg1 and syf2.</text>
</comment>
<comment type="subcellular location">
    <subcellularLocation>
        <location evidence="1">Cytoplasm</location>
    </subcellularLocation>
    <subcellularLocation>
        <location evidence="5">Nucleus</location>
    </subcellularLocation>
</comment>
<comment type="similarity">
    <text evidence="7">Belongs to the CWC21 family.</text>
</comment>
<name>CWC21_SCHPO</name>
<sequence>MSYNGIGLPTPRGSGTNGYVMRNLSHVKKYDKNTNLQSNRNAKALEKRVQDPSISEHECRRQIESKLLLYREQLLEEVSSQHSTDAAASDSNTNFGTENPKPPKAIIKDEQSQSKTKSLDEADVEILVQKYREQLLKELQLQKSTEKGKNFESILQPQKRKETRGFHSKNDDDGRLEERDDLRSSVDDDYYDYPRYSERKSLNSKRHVDNYNENRRRHYDSYSSYDELERRRSSNESYSRRSELPRRDYNRHDERERYSYHRRRERSNSPSYTKNESIPVVDRDSSPEGGEIV</sequence>
<gene>
    <name type="primary">cwf21</name>
    <name type="ORF">SPAC4A8.09c</name>
</gene>